<accession>B3MNR6</accession>
<proteinExistence type="inferred from homology"/>
<protein>
    <recommendedName>
        <fullName>Protein hook</fullName>
    </recommendedName>
</protein>
<gene>
    <name evidence="1" type="primary">hook</name>
    <name evidence="1" type="synonym">hk</name>
    <name type="ORF">GF15219</name>
</gene>
<dbReference type="EMBL" id="CH902620">
    <property type="protein sequence ID" value="EDV31153.1"/>
    <property type="molecule type" value="Genomic_DNA"/>
</dbReference>
<dbReference type="SMR" id="B3MNR6"/>
<dbReference type="FunCoup" id="B3MNR6">
    <property type="interactions" value="510"/>
</dbReference>
<dbReference type="STRING" id="7217.B3MNR6"/>
<dbReference type="EnsemblMetazoa" id="FBtr0119919">
    <property type="protein sequence ID" value="FBpp0118411"/>
    <property type="gene ID" value="FBgn0092244"/>
</dbReference>
<dbReference type="EnsemblMetazoa" id="XM_001961896.4">
    <property type="protein sequence ID" value="XP_001961932.1"/>
    <property type="gene ID" value="LOC6498032"/>
</dbReference>
<dbReference type="GeneID" id="6498032"/>
<dbReference type="KEGG" id="dan:6498032"/>
<dbReference type="CTD" id="35169"/>
<dbReference type="eggNOG" id="ENOG502QQM8">
    <property type="taxonomic scope" value="Eukaryota"/>
</dbReference>
<dbReference type="HOGENOM" id="CLU_011214_1_0_1"/>
<dbReference type="InParanoid" id="B3MNR6"/>
<dbReference type="OMA" id="DAKYRKC"/>
<dbReference type="OrthoDB" id="49395at2759"/>
<dbReference type="PhylomeDB" id="B3MNR6"/>
<dbReference type="Proteomes" id="UP000007801">
    <property type="component" value="Unassembled WGS sequence"/>
</dbReference>
<dbReference type="GO" id="GO:0005813">
    <property type="term" value="C:centrosome"/>
    <property type="evidence" value="ECO:0007669"/>
    <property type="project" value="TreeGrafter"/>
</dbReference>
<dbReference type="GO" id="GO:0005768">
    <property type="term" value="C:endosome"/>
    <property type="evidence" value="ECO:0000250"/>
    <property type="project" value="UniProtKB"/>
</dbReference>
<dbReference type="GO" id="GO:0005874">
    <property type="term" value="C:microtubule"/>
    <property type="evidence" value="ECO:0007669"/>
    <property type="project" value="UniProtKB-KW"/>
</dbReference>
<dbReference type="GO" id="GO:0045202">
    <property type="term" value="C:synapse"/>
    <property type="evidence" value="ECO:0000250"/>
    <property type="project" value="UniProtKB"/>
</dbReference>
<dbReference type="GO" id="GO:0051959">
    <property type="term" value="F:dynein light intermediate chain binding"/>
    <property type="evidence" value="ECO:0007669"/>
    <property type="project" value="TreeGrafter"/>
</dbReference>
<dbReference type="GO" id="GO:0008017">
    <property type="term" value="F:microtubule binding"/>
    <property type="evidence" value="ECO:0000250"/>
    <property type="project" value="UniProtKB"/>
</dbReference>
<dbReference type="GO" id="GO:0031267">
    <property type="term" value="F:small GTPase binding"/>
    <property type="evidence" value="ECO:0007669"/>
    <property type="project" value="EnsemblMetazoa"/>
</dbReference>
<dbReference type="GO" id="GO:0031122">
    <property type="term" value="P:cytoplasmic microtubule organization"/>
    <property type="evidence" value="ECO:0007669"/>
    <property type="project" value="InterPro"/>
</dbReference>
<dbReference type="GO" id="GO:0030705">
    <property type="term" value="P:cytoskeleton-dependent intracellular transport"/>
    <property type="evidence" value="ECO:0000250"/>
    <property type="project" value="UniProtKB"/>
</dbReference>
<dbReference type="GO" id="GO:0008340">
    <property type="term" value="P:determination of adult lifespan"/>
    <property type="evidence" value="ECO:0000250"/>
    <property type="project" value="UniProtKB"/>
</dbReference>
<dbReference type="GO" id="GO:0006897">
    <property type="term" value="P:endocytosis"/>
    <property type="evidence" value="ECO:0000250"/>
    <property type="project" value="UniProtKB"/>
</dbReference>
<dbReference type="CDD" id="cd22222">
    <property type="entry name" value="HkD_Hook"/>
    <property type="match status" value="1"/>
</dbReference>
<dbReference type="FunFam" id="1.10.418.10:FF:000024">
    <property type="entry name" value="Hook homolog 3 (Drosophila)"/>
    <property type="match status" value="1"/>
</dbReference>
<dbReference type="Gene3D" id="1.10.418.10">
    <property type="entry name" value="Calponin-like domain"/>
    <property type="match status" value="1"/>
</dbReference>
<dbReference type="InterPro" id="IPR001715">
    <property type="entry name" value="CH_dom"/>
</dbReference>
<dbReference type="InterPro" id="IPR036872">
    <property type="entry name" value="CH_dom_sf"/>
</dbReference>
<dbReference type="InterPro" id="IPR008636">
    <property type="entry name" value="Hook_C"/>
</dbReference>
<dbReference type="InterPro" id="IPR043936">
    <property type="entry name" value="HOOK_N"/>
</dbReference>
<dbReference type="PANTHER" id="PTHR18947">
    <property type="entry name" value="HOOK PROTEINS"/>
    <property type="match status" value="1"/>
</dbReference>
<dbReference type="PANTHER" id="PTHR18947:SF39">
    <property type="entry name" value="PROTEIN HOOK"/>
    <property type="match status" value="1"/>
</dbReference>
<dbReference type="Pfam" id="PF05622">
    <property type="entry name" value="HOOK"/>
    <property type="match status" value="1"/>
</dbReference>
<dbReference type="Pfam" id="PF19047">
    <property type="entry name" value="HOOK_N"/>
    <property type="match status" value="1"/>
</dbReference>
<dbReference type="SUPFAM" id="SSF116907">
    <property type="entry name" value="Hook domain"/>
    <property type="match status" value="1"/>
</dbReference>
<dbReference type="PROSITE" id="PS50021">
    <property type="entry name" value="CH"/>
    <property type="match status" value="1"/>
</dbReference>
<sequence>MSSPKNEMYYSLLEWFKTLNLNAPHSDAESLADGVALAQALNQFAPESFTDGWLSKIKPGAVGSNWRLRMSNLKKVAQSVYDYYSEVLNYSLGDFAKPDVQRIAEKCDLGELERLLQLVLGCAVNCTNKQSYITEIMSLEEELQANIMRALQELESTRNASSSPEAGGVVSSLSRSSLSGILDGKALQEERDAMAQKCFETEKKMLLLIDEKTNLQQELQKLQQEVSRMEHSSTAIGDDGVSLGPVQTGSVRYNDLRRQLDLLKEELLQSEGAREDLKLKAHQQETDLLHMQIRIDELMKSSAEVTTLKDEVDVLRESNDKLKICEAQLDTYKKKLEDYNDLKKQVRILEERSADYVQQNAQFEEDAKRYANTKGQVELFKKEIQDLHAKLDNESSKNVKLEFDNKNLESKNLALQRAKDSLLKERDNLREVVDELKCGQLSSSSALAGNTVSTELQPLATVDKLQRLEAENKALREGQGGQTALAQLLDEANKRNEHLREQLKTANERILSLSHATQSDDPIFKENEFGKQIKQLMELNEQKTLQLEEAVTQSSTMQCKVTQLETNLAAREQEILAYDAKYRKCVEKAKEVIKSIDPRIASALDASVLEKNAEVVEEEPKPKMTVMEEQLMTSAFYRLGVNAQRDAIDSKLAILMGSGQTFLARQRQSAPRKSLSAMKSK</sequence>
<organism>
    <name type="scientific">Drosophila ananassae</name>
    <name type="common">Fruit fly</name>
    <dbReference type="NCBI Taxonomy" id="7217"/>
    <lineage>
        <taxon>Eukaryota</taxon>
        <taxon>Metazoa</taxon>
        <taxon>Ecdysozoa</taxon>
        <taxon>Arthropoda</taxon>
        <taxon>Hexapoda</taxon>
        <taxon>Insecta</taxon>
        <taxon>Pterygota</taxon>
        <taxon>Neoptera</taxon>
        <taxon>Endopterygota</taxon>
        <taxon>Diptera</taxon>
        <taxon>Brachycera</taxon>
        <taxon>Muscomorpha</taxon>
        <taxon>Ephydroidea</taxon>
        <taxon>Drosophilidae</taxon>
        <taxon>Drosophila</taxon>
        <taxon>Sophophora</taxon>
    </lineage>
</organism>
<reference key="1">
    <citation type="journal article" date="2007" name="Nature">
        <title>Evolution of genes and genomes on the Drosophila phylogeny.</title>
        <authorList>
            <consortium name="Drosophila 12 genomes consortium"/>
        </authorList>
    </citation>
    <scope>NUCLEOTIDE SEQUENCE [LARGE SCALE GENOMIC DNA]</scope>
    <source>
        <strain>Tucson 14024-0371.13</strain>
    </source>
</reference>
<keyword id="KW-0175">Coiled coil</keyword>
<keyword id="KW-0963">Cytoplasm</keyword>
<keyword id="KW-0206">Cytoskeleton</keyword>
<keyword id="KW-0217">Developmental protein</keyword>
<keyword id="KW-0254">Endocytosis</keyword>
<keyword id="KW-0967">Endosome</keyword>
<keyword id="KW-0493">Microtubule</keyword>
<keyword id="KW-1185">Reference proteome</keyword>
<keyword id="KW-0770">Synapse</keyword>
<feature type="chain" id="PRO_0000379062" description="Protein hook">
    <location>
        <begin position="1"/>
        <end position="681"/>
    </location>
</feature>
<feature type="domain" description="Calponin-homology (CH)" evidence="3">
    <location>
        <begin position="6"/>
        <end position="123"/>
    </location>
</feature>
<feature type="coiled-coil region" evidence="2">
    <location>
        <begin position="135"/>
        <end position="439"/>
    </location>
</feature>
<feature type="coiled-coil region" evidence="2">
    <location>
        <begin position="482"/>
        <end position="584"/>
    </location>
</feature>
<name>HOOK_DROAN</name>
<comment type="function">
    <text evidence="1">Involved in endocytic trafficking by stabilizing organelles of the endocytic pathway. Probably acts as a cytoskeletal linker protein required to tether endosome vesicles to the cytoskeleton. Involved in modulation of endocytosis at stages required for down-regulation of membrane proteins that control synapse size. Not involved in synaptic vesicle recycling. Required in R7 cells for boss endocytosis into multivesicular bodies (MVBs). Has a role in regulating adult longevity.</text>
</comment>
<comment type="subunit">
    <text evidence="1">Homodimer. Interacts with microtubules via its N-terminus.</text>
</comment>
<comment type="subcellular location">
    <subcellularLocation>
        <location evidence="1">Cytoplasm</location>
        <location evidence="1">Cytoskeleton</location>
    </subcellularLocation>
    <subcellularLocation>
        <location evidence="1">Endosome</location>
    </subcellularLocation>
    <subcellularLocation>
        <location evidence="1">Synapse</location>
    </subcellularLocation>
    <text evidence="1">Enriched at neuromuscular synapses, in both presynaptic and postsynaptic regions.</text>
</comment>
<comment type="domain">
    <text evidence="1">The coiled coil domain mediates homodimerization.</text>
</comment>
<comment type="similarity">
    <text evidence="4">Belongs to the hook family.</text>
</comment>
<evidence type="ECO:0000250" key="1">
    <source>
        <dbReference type="UniProtKB" id="Q24185"/>
    </source>
</evidence>
<evidence type="ECO:0000255" key="2"/>
<evidence type="ECO:0000255" key="3">
    <source>
        <dbReference type="PROSITE-ProRule" id="PRU00044"/>
    </source>
</evidence>
<evidence type="ECO:0000305" key="4"/>